<name>DHSO_MOUSE</name>
<feature type="initiator methionine" description="Removed" evidence="2">
    <location>
        <position position="1"/>
    </location>
</feature>
<feature type="chain" id="PRO_0000000882" description="Sorbitol dehydrogenase">
    <location>
        <begin position="2"/>
        <end position="357"/>
    </location>
</feature>
<feature type="binding site" evidence="1">
    <location>
        <position position="45"/>
    </location>
    <ligand>
        <name>Zn(2+)</name>
        <dbReference type="ChEBI" id="CHEBI:29105"/>
        <note>catalytic</note>
    </ligand>
</feature>
<feature type="binding site" evidence="1">
    <location>
        <position position="51"/>
    </location>
    <ligand>
        <name>substrate</name>
    </ligand>
</feature>
<feature type="binding site" evidence="1">
    <location>
        <position position="70"/>
    </location>
    <ligand>
        <name>Zn(2+)</name>
        <dbReference type="ChEBI" id="CHEBI:29105"/>
        <note>catalytic</note>
    </ligand>
</feature>
<feature type="binding site" evidence="1">
    <location>
        <position position="71"/>
    </location>
    <ligand>
        <name>Zn(2+)</name>
        <dbReference type="ChEBI" id="CHEBI:29105"/>
        <note>catalytic</note>
    </ligand>
</feature>
<feature type="binding site" evidence="1">
    <location>
        <position position="156"/>
    </location>
    <ligand>
        <name>substrate</name>
    </ligand>
</feature>
<feature type="binding site" evidence="2">
    <location>
        <position position="184"/>
    </location>
    <ligand>
        <name>NAD(+)</name>
        <dbReference type="ChEBI" id="CHEBI:57540"/>
    </ligand>
</feature>
<feature type="binding site" evidence="2">
    <location>
        <position position="204"/>
    </location>
    <ligand>
        <name>NAD(+)</name>
        <dbReference type="ChEBI" id="CHEBI:57540"/>
    </ligand>
</feature>
<feature type="binding site" evidence="2">
    <location>
        <position position="209"/>
    </location>
    <ligand>
        <name>NAD(+)</name>
        <dbReference type="ChEBI" id="CHEBI:57540"/>
    </ligand>
</feature>
<feature type="binding site" evidence="2">
    <location>
        <begin position="273"/>
        <end position="275"/>
    </location>
    <ligand>
        <name>NAD(+)</name>
        <dbReference type="ChEBI" id="CHEBI:57540"/>
    </ligand>
</feature>
<feature type="binding site" evidence="2">
    <location>
        <begin position="297"/>
        <end position="299"/>
    </location>
    <ligand>
        <name>NAD(+)</name>
        <dbReference type="ChEBI" id="CHEBI:57540"/>
    </ligand>
</feature>
<feature type="binding site" evidence="1">
    <location>
        <position position="299"/>
    </location>
    <ligand>
        <name>substrate</name>
    </ligand>
</feature>
<feature type="binding site" evidence="1">
    <location>
        <position position="300"/>
    </location>
    <ligand>
        <name>substrate</name>
    </ligand>
</feature>
<feature type="modified residue" description="N-acetylalanine" evidence="2">
    <location>
        <position position="2"/>
    </location>
</feature>
<feature type="modified residue" description="Phosphoserine" evidence="10">
    <location>
        <position position="169"/>
    </location>
</feature>
<feature type="sequence conflict" description="In Ref. 1; AAA79043." evidence="9" ref="1">
    <original>V</original>
    <variation>L</variation>
    <location>
        <position position="49"/>
    </location>
</feature>
<feature type="sequence conflict" description="In Ref. 1; AAA79043." evidence="9" ref="1">
    <original>T</original>
    <variation>S</variation>
    <location>
        <position position="259"/>
    </location>
</feature>
<comment type="function">
    <text evidence="2 3 4">Polyol dehydrogenase that catalyzes the reversible NAD(+)-dependent oxidation of various sugar alcohols (By similarity). Is active with D-sorbitol (D-glucitol) leading to the C2-oxidized product D-fructose (PubMed:6852349). Is a key enzyme in the polyol pathway that interconverts glucose and fructose via sorbitol, which constitutes an important alternate route for glucose metabolism (By similarity). May play a role in sperm motility by using sorbitol as an alternative energy source for sperm motility and protein tyrosine phosphorylation (PubMed:18799757). Has no activity on ethanol. Cannot use NADP(+) as the electron acceptor (PubMed:6852349).</text>
</comment>
<comment type="catalytic activity">
    <reaction evidence="4">
        <text>keto-D-fructose + NADH + H(+) = D-sorbitol + NAD(+)</text>
        <dbReference type="Rhea" id="RHEA:33031"/>
        <dbReference type="ChEBI" id="CHEBI:15378"/>
        <dbReference type="ChEBI" id="CHEBI:17924"/>
        <dbReference type="ChEBI" id="CHEBI:48095"/>
        <dbReference type="ChEBI" id="CHEBI:57540"/>
        <dbReference type="ChEBI" id="CHEBI:57945"/>
    </reaction>
</comment>
<comment type="catalytic activity">
    <reaction evidence="1">
        <text>xylitol + NAD(+) = D-xylulose + NADH + H(+)</text>
        <dbReference type="Rhea" id="RHEA:20433"/>
        <dbReference type="ChEBI" id="CHEBI:15378"/>
        <dbReference type="ChEBI" id="CHEBI:17140"/>
        <dbReference type="ChEBI" id="CHEBI:17151"/>
        <dbReference type="ChEBI" id="CHEBI:57540"/>
        <dbReference type="ChEBI" id="CHEBI:57945"/>
        <dbReference type="EC" id="1.1.1.9"/>
    </reaction>
</comment>
<comment type="catalytic activity">
    <reaction evidence="1">
        <text>L-iditol + NAD(+) = keto-L-sorbose + NADH + H(+)</text>
        <dbReference type="Rhea" id="RHEA:10160"/>
        <dbReference type="ChEBI" id="CHEBI:13172"/>
        <dbReference type="ChEBI" id="CHEBI:15378"/>
        <dbReference type="ChEBI" id="CHEBI:18202"/>
        <dbReference type="ChEBI" id="CHEBI:57540"/>
        <dbReference type="ChEBI" id="CHEBI:57945"/>
        <dbReference type="EC" id="1.1.1.14"/>
    </reaction>
</comment>
<comment type="cofactor">
    <cofactor evidence="1">
        <name>Zn(2+)</name>
        <dbReference type="ChEBI" id="CHEBI:29105"/>
    </cofactor>
    <text evidence="1">Binds 1 zinc ion per subunit.</text>
</comment>
<comment type="activity regulation">
    <text evidence="4">Inhibited in vitro by p-hydroxymercuribenzoate, EDTA, l,l0-phenanthroline and N-ethylmaleimide.</text>
</comment>
<comment type="biophysicochemical properties">
    <kinetics>
        <KM evidence="4">1.54 mM for sorbitol</KM>
        <KM evidence="4">58.8 uM for NAD(+)</KM>
        <KM evidence="4">154 mM for fructose</KM>
        <KM evidence="4">15 uM for NADH</KM>
    </kinetics>
    <phDependence>
        <text evidence="4">Optimum pH is 9.0 for sorbitol oxidation and 7.5 for D-fructose reduction.</text>
    </phDependence>
</comment>
<comment type="subunit">
    <text evidence="4">Homotetramer.</text>
</comment>
<comment type="subcellular location">
    <subcellularLocation>
        <location evidence="3">Mitochondrion membrane</location>
        <topology evidence="3">Peripheral membrane protein</topology>
    </subcellularLocation>
    <subcellularLocation>
        <location evidence="3">Cell projection</location>
        <location evidence="3">Cilium</location>
        <location evidence="3">Flagellum</location>
    </subcellularLocation>
    <text>Associated with mitochondria of the midpiece and near the plasma membrane in the principal piece of the flagellum. Also found in the epididymosome, secreted by the epididymal epithelium and that transfers proteins from the epididymal fluid to the sperm surface.</text>
</comment>
<comment type="tissue specificity">
    <text evidence="3 4 5">Testis has the highest level of expression, followed by kidney, liver, and lung. Low levels of expression are also observed in lens, brain, and skeletal muscle. Expressed in sperm flagellum and very low expression in the sperm head.</text>
</comment>
<comment type="developmental stage">
    <text evidence="3">Detected early in spermatogenesis. Detected in condensing spermatids (at protein level) and is up-regulated during late spermatogenesis.</text>
</comment>
<comment type="similarity">
    <text evidence="9">Belongs to the zinc-containing alcohol dehydrogenase family.</text>
</comment>
<comment type="sequence caution" evidence="9">
    <conflict type="erroneous initiation">
        <sequence resource="EMBL-CDS" id="AAA79043"/>
    </conflict>
    <text>Extended N-terminus.</text>
</comment>
<evidence type="ECO:0000250" key="1">
    <source>
        <dbReference type="UniProtKB" id="P07846"/>
    </source>
</evidence>
<evidence type="ECO:0000250" key="2">
    <source>
        <dbReference type="UniProtKB" id="Q00796"/>
    </source>
</evidence>
<evidence type="ECO:0000269" key="3">
    <source>
    </source>
</evidence>
<evidence type="ECO:0000269" key="4">
    <source>
    </source>
</evidence>
<evidence type="ECO:0000269" key="5">
    <source>
    </source>
</evidence>
<evidence type="ECO:0000303" key="6">
    <source>
    </source>
</evidence>
<evidence type="ECO:0000303" key="7">
    <source>
    </source>
</evidence>
<evidence type="ECO:0000303" key="8">
    <source>
    </source>
</evidence>
<evidence type="ECO:0000305" key="9"/>
<evidence type="ECO:0007744" key="10">
    <source>
    </source>
</evidence>
<gene>
    <name type="primary">Sord</name>
    <name type="synonym">Sdh1</name>
</gene>
<protein>
    <recommendedName>
        <fullName evidence="6 7 8">Sorbitol dehydrogenase</fullName>
        <shortName>SDH</shortName>
        <shortName evidence="6">SORD</shortName>
        <ecNumber evidence="4">1.1.1.-</ecNumber>
    </recommendedName>
    <alternativeName>
        <fullName>L-iditol 2-dehydrogenase</fullName>
        <ecNumber evidence="1">1.1.1.14</ecNumber>
    </alternativeName>
    <alternativeName>
        <fullName evidence="9">Polyol dehydrogenase</fullName>
    </alternativeName>
    <alternativeName>
        <fullName>Xylitol dehydrogenase</fullName>
        <shortName>XDH</shortName>
        <ecNumber evidence="1">1.1.1.9</ecNumber>
    </alternativeName>
</protein>
<accession>Q64442</accession>
<accession>Q569V5</accession>
<accession>Q9CPS0</accession>
<keyword id="KW-0007">Acetylation</keyword>
<keyword id="KW-0966">Cell projection</keyword>
<keyword id="KW-0969">Cilium</keyword>
<keyword id="KW-0282">Flagellum</keyword>
<keyword id="KW-0472">Membrane</keyword>
<keyword id="KW-0479">Metal-binding</keyword>
<keyword id="KW-0496">Mitochondrion</keyword>
<keyword id="KW-0520">NAD</keyword>
<keyword id="KW-0560">Oxidoreductase</keyword>
<keyword id="KW-0597">Phosphoprotein</keyword>
<keyword id="KW-1185">Reference proteome</keyword>
<keyword id="KW-0862">Zinc</keyword>
<sequence length="357" mass="38249">MAAPAKGENLSLVVHGPGDIRLENYPIPELGPNDVLLKMHSVGICGSDVHYWEHGRIGDFVVKKPMVLGHEAAGTVTKVGELVKHLKPGDRVAIEPGVPREVDEYCKIGRYNLTPTIFFCATPPDDGNLCRFYKHNADFCYKLPDSVTFEEGALIEPLSVGIYACRRGSVSLGNKVLVCGAGPVGMVTLLVAKAMGAAQVVVTDLSASRLTKAKEVGADFTIQVGKETPQEIASKVESLLGSKPEVTIECTGAESSVQTGIYATHSGGTLVIVGMGAEMVNLPLVHAAIREVDIKGVFRYCNTWPMAISMLASKTLNVKPLVTHRFPLEKAVEAFETAKKGVGLKVMIKCDPNDQNP</sequence>
<reference key="1">
    <citation type="journal article" date="1995" name="Eur. J. Biochem.">
        <title>Cloning, sequencing, and determination of the sites of expression of mouse sorbitol dehydrogenase cDNA.</title>
        <authorList>
            <person name="Lee F.K."/>
            <person name="Lee A.Y.W."/>
            <person name="Lin C.X.F."/>
            <person name="Chung S.S.-M."/>
            <person name="Chung S.K."/>
        </authorList>
    </citation>
    <scope>NUCLEOTIDE SEQUENCE [MRNA]</scope>
    <scope>TISSUE SPECIFICITY</scope>
    <source>
        <strain>BALB/cJ</strain>
        <tissue>Liver</tissue>
    </source>
</reference>
<reference key="2">
    <citation type="journal article" date="2005" name="Science">
        <title>The transcriptional landscape of the mammalian genome.</title>
        <authorList>
            <person name="Carninci P."/>
            <person name="Kasukawa T."/>
            <person name="Katayama S."/>
            <person name="Gough J."/>
            <person name="Frith M.C."/>
            <person name="Maeda N."/>
            <person name="Oyama R."/>
            <person name="Ravasi T."/>
            <person name="Lenhard B."/>
            <person name="Wells C."/>
            <person name="Kodzius R."/>
            <person name="Shimokawa K."/>
            <person name="Bajic V.B."/>
            <person name="Brenner S.E."/>
            <person name="Batalov S."/>
            <person name="Forrest A.R."/>
            <person name="Zavolan M."/>
            <person name="Davis M.J."/>
            <person name="Wilming L.G."/>
            <person name="Aidinis V."/>
            <person name="Allen J.E."/>
            <person name="Ambesi-Impiombato A."/>
            <person name="Apweiler R."/>
            <person name="Aturaliya R.N."/>
            <person name="Bailey T.L."/>
            <person name="Bansal M."/>
            <person name="Baxter L."/>
            <person name="Beisel K.W."/>
            <person name="Bersano T."/>
            <person name="Bono H."/>
            <person name="Chalk A.M."/>
            <person name="Chiu K.P."/>
            <person name="Choudhary V."/>
            <person name="Christoffels A."/>
            <person name="Clutterbuck D.R."/>
            <person name="Crowe M.L."/>
            <person name="Dalla E."/>
            <person name="Dalrymple B.P."/>
            <person name="de Bono B."/>
            <person name="Della Gatta G."/>
            <person name="di Bernardo D."/>
            <person name="Down T."/>
            <person name="Engstrom P."/>
            <person name="Fagiolini M."/>
            <person name="Faulkner G."/>
            <person name="Fletcher C.F."/>
            <person name="Fukushima T."/>
            <person name="Furuno M."/>
            <person name="Futaki S."/>
            <person name="Gariboldi M."/>
            <person name="Georgii-Hemming P."/>
            <person name="Gingeras T.R."/>
            <person name="Gojobori T."/>
            <person name="Green R.E."/>
            <person name="Gustincich S."/>
            <person name="Harbers M."/>
            <person name="Hayashi Y."/>
            <person name="Hensch T.K."/>
            <person name="Hirokawa N."/>
            <person name="Hill D."/>
            <person name="Huminiecki L."/>
            <person name="Iacono M."/>
            <person name="Ikeo K."/>
            <person name="Iwama A."/>
            <person name="Ishikawa T."/>
            <person name="Jakt M."/>
            <person name="Kanapin A."/>
            <person name="Katoh M."/>
            <person name="Kawasawa Y."/>
            <person name="Kelso J."/>
            <person name="Kitamura H."/>
            <person name="Kitano H."/>
            <person name="Kollias G."/>
            <person name="Krishnan S.P."/>
            <person name="Kruger A."/>
            <person name="Kummerfeld S.K."/>
            <person name="Kurochkin I.V."/>
            <person name="Lareau L.F."/>
            <person name="Lazarevic D."/>
            <person name="Lipovich L."/>
            <person name="Liu J."/>
            <person name="Liuni S."/>
            <person name="McWilliam S."/>
            <person name="Madan Babu M."/>
            <person name="Madera M."/>
            <person name="Marchionni L."/>
            <person name="Matsuda H."/>
            <person name="Matsuzawa S."/>
            <person name="Miki H."/>
            <person name="Mignone F."/>
            <person name="Miyake S."/>
            <person name="Morris K."/>
            <person name="Mottagui-Tabar S."/>
            <person name="Mulder N."/>
            <person name="Nakano N."/>
            <person name="Nakauchi H."/>
            <person name="Ng P."/>
            <person name="Nilsson R."/>
            <person name="Nishiguchi S."/>
            <person name="Nishikawa S."/>
            <person name="Nori F."/>
            <person name="Ohara O."/>
            <person name="Okazaki Y."/>
            <person name="Orlando V."/>
            <person name="Pang K.C."/>
            <person name="Pavan W.J."/>
            <person name="Pavesi G."/>
            <person name="Pesole G."/>
            <person name="Petrovsky N."/>
            <person name="Piazza S."/>
            <person name="Reed J."/>
            <person name="Reid J.F."/>
            <person name="Ring B.Z."/>
            <person name="Ringwald M."/>
            <person name="Rost B."/>
            <person name="Ruan Y."/>
            <person name="Salzberg S.L."/>
            <person name="Sandelin A."/>
            <person name="Schneider C."/>
            <person name="Schoenbach C."/>
            <person name="Sekiguchi K."/>
            <person name="Semple C.A."/>
            <person name="Seno S."/>
            <person name="Sessa L."/>
            <person name="Sheng Y."/>
            <person name="Shibata Y."/>
            <person name="Shimada H."/>
            <person name="Shimada K."/>
            <person name="Silva D."/>
            <person name="Sinclair B."/>
            <person name="Sperling S."/>
            <person name="Stupka E."/>
            <person name="Sugiura K."/>
            <person name="Sultana R."/>
            <person name="Takenaka Y."/>
            <person name="Taki K."/>
            <person name="Tammoja K."/>
            <person name="Tan S.L."/>
            <person name="Tang S."/>
            <person name="Taylor M.S."/>
            <person name="Tegner J."/>
            <person name="Teichmann S.A."/>
            <person name="Ueda H.R."/>
            <person name="van Nimwegen E."/>
            <person name="Verardo R."/>
            <person name="Wei C.L."/>
            <person name="Yagi K."/>
            <person name="Yamanishi H."/>
            <person name="Zabarovsky E."/>
            <person name="Zhu S."/>
            <person name="Zimmer A."/>
            <person name="Hide W."/>
            <person name="Bult C."/>
            <person name="Grimmond S.M."/>
            <person name="Teasdale R.D."/>
            <person name="Liu E.T."/>
            <person name="Brusic V."/>
            <person name="Quackenbush J."/>
            <person name="Wahlestedt C."/>
            <person name="Mattick J.S."/>
            <person name="Hume D.A."/>
            <person name="Kai C."/>
            <person name="Sasaki D."/>
            <person name="Tomaru Y."/>
            <person name="Fukuda S."/>
            <person name="Kanamori-Katayama M."/>
            <person name="Suzuki M."/>
            <person name="Aoki J."/>
            <person name="Arakawa T."/>
            <person name="Iida J."/>
            <person name="Imamura K."/>
            <person name="Itoh M."/>
            <person name="Kato T."/>
            <person name="Kawaji H."/>
            <person name="Kawagashira N."/>
            <person name="Kawashima T."/>
            <person name="Kojima M."/>
            <person name="Kondo S."/>
            <person name="Konno H."/>
            <person name="Nakano K."/>
            <person name="Ninomiya N."/>
            <person name="Nishio T."/>
            <person name="Okada M."/>
            <person name="Plessy C."/>
            <person name="Shibata K."/>
            <person name="Shiraki T."/>
            <person name="Suzuki S."/>
            <person name="Tagami M."/>
            <person name="Waki K."/>
            <person name="Watahiki A."/>
            <person name="Okamura-Oho Y."/>
            <person name="Suzuki H."/>
            <person name="Kawai J."/>
            <person name="Hayashizaki Y."/>
        </authorList>
    </citation>
    <scope>NUCLEOTIDE SEQUENCE [LARGE SCALE MRNA]</scope>
    <source>
        <strain>C57BL/6J</strain>
        <tissue>Blastocyst</tissue>
        <tissue>Lung</tissue>
        <tissue>Testis</tissue>
    </source>
</reference>
<reference key="3">
    <citation type="journal article" date="2009" name="PLoS Biol.">
        <title>Lineage-specific biology revealed by a finished genome assembly of the mouse.</title>
        <authorList>
            <person name="Church D.M."/>
            <person name="Goodstadt L."/>
            <person name="Hillier L.W."/>
            <person name="Zody M.C."/>
            <person name="Goldstein S."/>
            <person name="She X."/>
            <person name="Bult C.J."/>
            <person name="Agarwala R."/>
            <person name="Cherry J.L."/>
            <person name="DiCuccio M."/>
            <person name="Hlavina W."/>
            <person name="Kapustin Y."/>
            <person name="Meric P."/>
            <person name="Maglott D."/>
            <person name="Birtle Z."/>
            <person name="Marques A.C."/>
            <person name="Graves T."/>
            <person name="Zhou S."/>
            <person name="Teague B."/>
            <person name="Potamousis K."/>
            <person name="Churas C."/>
            <person name="Place M."/>
            <person name="Herschleb J."/>
            <person name="Runnheim R."/>
            <person name="Forrest D."/>
            <person name="Amos-Landgraf J."/>
            <person name="Schwartz D.C."/>
            <person name="Cheng Z."/>
            <person name="Lindblad-Toh K."/>
            <person name="Eichler E.E."/>
            <person name="Ponting C.P."/>
        </authorList>
    </citation>
    <scope>NUCLEOTIDE SEQUENCE [LARGE SCALE GENOMIC DNA]</scope>
    <source>
        <strain>C57BL/6J</strain>
    </source>
</reference>
<reference key="4">
    <citation type="journal article" date="2004" name="Genome Res.">
        <title>The status, quality, and expansion of the NIH full-length cDNA project: the Mammalian Gene Collection (MGC).</title>
        <authorList>
            <consortium name="The MGC Project Team"/>
        </authorList>
    </citation>
    <scope>NUCLEOTIDE SEQUENCE [LARGE SCALE MRNA]</scope>
    <source>
        <tissue>Kidney</tissue>
        <tissue>Liver</tissue>
    </source>
</reference>
<reference key="5">
    <citation type="journal article" date="1983" name="Int. J. Biochem.">
        <title>Purification and properties of sorbitol dehydrogenase from mouse liver.</title>
        <authorList>
            <person name="Burnell J.N."/>
            <person name="Holmes R.S."/>
        </authorList>
    </citation>
    <scope>FUNCTION</scope>
    <scope>CATALYTIC ACTIVITY</scope>
    <scope>BIOPHYSICOCHEMICAL PROPERTIES</scope>
    <scope>ACTIVITY REGULATION</scope>
    <scope>SUBUNIT</scope>
    <scope>TISSUE SPECIFICITY</scope>
</reference>
<reference key="6">
    <citation type="journal article" date="2008" name="J. Proteome Res.">
        <title>Specific phosphopeptide enrichment with immobilized titanium ion affinity chromatography adsorbent for phosphoproteome analysis.</title>
        <authorList>
            <person name="Zhou H."/>
            <person name="Ye M."/>
            <person name="Dong J."/>
            <person name="Han G."/>
            <person name="Jiang X."/>
            <person name="Wu R."/>
            <person name="Zou H."/>
        </authorList>
    </citation>
    <scope>PHOSPHORYLATION [LARGE SCALE ANALYSIS] AT SER-169</scope>
    <scope>IDENTIFICATION BY MASS SPECTROMETRY [LARGE SCALE ANALYSIS]</scope>
    <source>
        <tissue>Liver</tissue>
    </source>
</reference>
<reference key="7">
    <citation type="journal article" date="2009" name="Biol. Reprod.">
        <title>Sorbitol can fuel mouse sperm motility and protein tyrosine phosphorylation via sorbitol dehydrogenase.</title>
        <authorList>
            <person name="Cao W."/>
            <person name="Aghajanian H.K."/>
            <person name="Haig-Ladewig L.A."/>
            <person name="Gerton G.L."/>
        </authorList>
    </citation>
    <scope>FUNCTION</scope>
    <scope>SUBCELLULAR LOCATION</scope>
    <scope>TISSUE SPECIFICITY</scope>
    <scope>DEVELOPMENTAL STAGE</scope>
</reference>
<reference key="8">
    <citation type="journal article" date="2010" name="Cell">
        <title>A tissue-specific atlas of mouse protein phosphorylation and expression.</title>
        <authorList>
            <person name="Huttlin E.L."/>
            <person name="Jedrychowski M.P."/>
            <person name="Elias J.E."/>
            <person name="Goswami T."/>
            <person name="Rad R."/>
            <person name="Beausoleil S.A."/>
            <person name="Villen J."/>
            <person name="Haas W."/>
            <person name="Sowa M.E."/>
            <person name="Gygi S.P."/>
        </authorList>
    </citation>
    <scope>IDENTIFICATION BY MASS SPECTROMETRY [LARGE SCALE ANALYSIS]</scope>
    <source>
        <tissue>Brain</tissue>
        <tissue>Brown adipose tissue</tissue>
        <tissue>Heart</tissue>
        <tissue>Kidney</tissue>
        <tissue>Liver</tissue>
        <tissue>Lung</tissue>
        <tissue>Pancreas</tissue>
        <tissue>Spleen</tissue>
        <tissue>Testis</tissue>
    </source>
</reference>
<proteinExistence type="evidence at protein level"/>
<organism>
    <name type="scientific">Mus musculus</name>
    <name type="common">Mouse</name>
    <dbReference type="NCBI Taxonomy" id="10090"/>
    <lineage>
        <taxon>Eukaryota</taxon>
        <taxon>Metazoa</taxon>
        <taxon>Chordata</taxon>
        <taxon>Craniata</taxon>
        <taxon>Vertebrata</taxon>
        <taxon>Euteleostomi</taxon>
        <taxon>Mammalia</taxon>
        <taxon>Eutheria</taxon>
        <taxon>Euarchontoglires</taxon>
        <taxon>Glires</taxon>
        <taxon>Rodentia</taxon>
        <taxon>Myomorpha</taxon>
        <taxon>Muroidea</taxon>
        <taxon>Muridae</taxon>
        <taxon>Murinae</taxon>
        <taxon>Mus</taxon>
        <taxon>Mus</taxon>
    </lineage>
</organism>
<dbReference type="EC" id="1.1.1.-" evidence="4"/>
<dbReference type="EC" id="1.1.1.14" evidence="1"/>
<dbReference type="EC" id="1.1.1.9" evidence="1"/>
<dbReference type="EMBL" id="U27014">
    <property type="protein sequence ID" value="AAA79043.1"/>
    <property type="status" value="ALT_INIT"/>
    <property type="molecule type" value="mRNA"/>
</dbReference>
<dbReference type="EMBL" id="AK004692">
    <property type="protein sequence ID" value="BAB23478.1"/>
    <property type="molecule type" value="mRNA"/>
</dbReference>
<dbReference type="EMBL" id="AK015059">
    <property type="protein sequence ID" value="BAB29695.1"/>
    <property type="molecule type" value="mRNA"/>
</dbReference>
<dbReference type="EMBL" id="AK166988">
    <property type="protein sequence ID" value="BAE39168.1"/>
    <property type="molecule type" value="mRNA"/>
</dbReference>
<dbReference type="EMBL" id="AK166996">
    <property type="protein sequence ID" value="BAE39175.1"/>
    <property type="molecule type" value="mRNA"/>
</dbReference>
<dbReference type="EMBL" id="AL844566">
    <property type="status" value="NOT_ANNOTATED_CDS"/>
    <property type="molecule type" value="Genomic_DNA"/>
</dbReference>
<dbReference type="EMBL" id="AL844573">
    <property type="status" value="NOT_ANNOTATED_CDS"/>
    <property type="molecule type" value="Genomic_DNA"/>
</dbReference>
<dbReference type="EMBL" id="BC024124">
    <property type="protein sequence ID" value="AAH24124.1"/>
    <property type="molecule type" value="mRNA"/>
</dbReference>
<dbReference type="EMBL" id="BC030875">
    <property type="protein sequence ID" value="AAH30875.1"/>
    <property type="molecule type" value="mRNA"/>
</dbReference>
<dbReference type="EMBL" id="BC092291">
    <property type="protein sequence ID" value="AAH92291.1"/>
    <property type="molecule type" value="mRNA"/>
</dbReference>
<dbReference type="CCDS" id="CCDS16657.1"/>
<dbReference type="PIR" id="S65956">
    <property type="entry name" value="S65956"/>
</dbReference>
<dbReference type="RefSeq" id="NP_666238.1">
    <property type="nucleotide sequence ID" value="NM_146126.4"/>
</dbReference>
<dbReference type="SMR" id="Q64442"/>
<dbReference type="BioGRID" id="203145">
    <property type="interactions" value="6"/>
</dbReference>
<dbReference type="FunCoup" id="Q64442">
    <property type="interactions" value="1032"/>
</dbReference>
<dbReference type="IntAct" id="Q64442">
    <property type="interactions" value="1"/>
</dbReference>
<dbReference type="STRING" id="10090.ENSMUSP00000106180"/>
<dbReference type="GlyGen" id="Q64442">
    <property type="glycosylation" value="1 site, 1 O-linked glycan (1 site)"/>
</dbReference>
<dbReference type="iPTMnet" id="Q64442"/>
<dbReference type="MetOSite" id="Q64442"/>
<dbReference type="PhosphoSitePlus" id="Q64442"/>
<dbReference type="SwissPalm" id="Q64442"/>
<dbReference type="REPRODUCTION-2DPAGE" id="IPI00753038"/>
<dbReference type="REPRODUCTION-2DPAGE" id="Q64442"/>
<dbReference type="CPTAC" id="non-CPTAC-3910"/>
<dbReference type="jPOST" id="Q64442"/>
<dbReference type="PaxDb" id="10090-ENSMUSP00000106180"/>
<dbReference type="PeptideAtlas" id="Q64442"/>
<dbReference type="ProteomicsDB" id="279648"/>
<dbReference type="Pumba" id="Q64442"/>
<dbReference type="Antibodypedia" id="24307">
    <property type="antibodies" value="580 antibodies from 31 providers"/>
</dbReference>
<dbReference type="DNASU" id="20322"/>
<dbReference type="Ensembl" id="ENSMUST00000110551.4">
    <property type="protein sequence ID" value="ENSMUSP00000106180.4"/>
    <property type="gene ID" value="ENSMUSG00000027227.8"/>
</dbReference>
<dbReference type="GeneID" id="20322"/>
<dbReference type="KEGG" id="mmu:20322"/>
<dbReference type="UCSC" id="uc008maj.1">
    <property type="organism name" value="mouse"/>
</dbReference>
<dbReference type="AGR" id="MGI:98266"/>
<dbReference type="CTD" id="6652"/>
<dbReference type="MGI" id="MGI:98266">
    <property type="gene designation" value="Sord"/>
</dbReference>
<dbReference type="VEuPathDB" id="HostDB:ENSMUSG00000027227"/>
<dbReference type="eggNOG" id="KOG0024">
    <property type="taxonomic scope" value="Eukaryota"/>
</dbReference>
<dbReference type="GeneTree" id="ENSGT00550000074781"/>
<dbReference type="HOGENOM" id="CLU_026673_11_5_1"/>
<dbReference type="InParanoid" id="Q64442"/>
<dbReference type="OMA" id="FETWYAM"/>
<dbReference type="OrthoDB" id="1879366at2759"/>
<dbReference type="PhylomeDB" id="Q64442"/>
<dbReference type="TreeFam" id="TF313060"/>
<dbReference type="Reactome" id="R-MMU-5652227">
    <property type="pathway name" value="Fructose biosynthesis"/>
</dbReference>
<dbReference type="Reactome" id="R-MMU-5661270">
    <property type="pathway name" value="Formation of xylulose-5-phosphate"/>
</dbReference>
<dbReference type="BioGRID-ORCS" id="20322">
    <property type="hits" value="1 hit in 79 CRISPR screens"/>
</dbReference>
<dbReference type="ChiTaRS" id="Sord">
    <property type="organism name" value="mouse"/>
</dbReference>
<dbReference type="PRO" id="PR:Q64442"/>
<dbReference type="Proteomes" id="UP000000589">
    <property type="component" value="Chromosome 2"/>
</dbReference>
<dbReference type="RNAct" id="Q64442">
    <property type="molecule type" value="protein"/>
</dbReference>
<dbReference type="Bgee" id="ENSMUSG00000027227">
    <property type="expression patterns" value="Expressed in seminiferous tubule of testis and 224 other cell types or tissues"/>
</dbReference>
<dbReference type="GO" id="GO:0005829">
    <property type="term" value="C:cytosol"/>
    <property type="evidence" value="ECO:0000314"/>
    <property type="project" value="MGI"/>
</dbReference>
<dbReference type="GO" id="GO:0070062">
    <property type="term" value="C:extracellular exosome"/>
    <property type="evidence" value="ECO:0007669"/>
    <property type="project" value="Ensembl"/>
</dbReference>
<dbReference type="GO" id="GO:0031966">
    <property type="term" value="C:mitochondrial membrane"/>
    <property type="evidence" value="ECO:0007669"/>
    <property type="project" value="UniProtKB-SubCell"/>
</dbReference>
<dbReference type="GO" id="GO:0005739">
    <property type="term" value="C:mitochondrion"/>
    <property type="evidence" value="ECO:0000314"/>
    <property type="project" value="UniProtKB"/>
</dbReference>
<dbReference type="GO" id="GO:0031514">
    <property type="term" value="C:motile cilium"/>
    <property type="evidence" value="ECO:0000314"/>
    <property type="project" value="UniProtKB"/>
</dbReference>
<dbReference type="GO" id="GO:0047833">
    <property type="term" value="F:D-sorbitol dehydrogenase (acceptor) activity"/>
    <property type="evidence" value="ECO:0000314"/>
    <property type="project" value="MGI"/>
</dbReference>
<dbReference type="GO" id="GO:0046526">
    <property type="term" value="F:D-xylulose reductase activity"/>
    <property type="evidence" value="ECO:0000314"/>
    <property type="project" value="MGI"/>
</dbReference>
<dbReference type="GO" id="GO:0042802">
    <property type="term" value="F:identical protein binding"/>
    <property type="evidence" value="ECO:0007669"/>
    <property type="project" value="Ensembl"/>
</dbReference>
<dbReference type="GO" id="GO:0003939">
    <property type="term" value="F:L-iditol 2-dehydrogenase (NAD+) activity"/>
    <property type="evidence" value="ECO:0000314"/>
    <property type="project" value="MGI"/>
</dbReference>
<dbReference type="GO" id="GO:0051287">
    <property type="term" value="F:NAD binding"/>
    <property type="evidence" value="ECO:0007669"/>
    <property type="project" value="Ensembl"/>
</dbReference>
<dbReference type="GO" id="GO:0008270">
    <property type="term" value="F:zinc ion binding"/>
    <property type="evidence" value="ECO:0007669"/>
    <property type="project" value="Ensembl"/>
</dbReference>
<dbReference type="GO" id="GO:0019640">
    <property type="term" value="P:D-glucuronate catabolic process to D-xylulose 5-phosphate"/>
    <property type="evidence" value="ECO:0000314"/>
    <property type="project" value="MGI"/>
</dbReference>
<dbReference type="GO" id="GO:0030317">
    <property type="term" value="P:flagellated sperm motility"/>
    <property type="evidence" value="ECO:0000314"/>
    <property type="project" value="UniProtKB"/>
</dbReference>
<dbReference type="GO" id="GO:0046370">
    <property type="term" value="P:fructose biosynthetic process"/>
    <property type="evidence" value="ECO:0000314"/>
    <property type="project" value="MGI"/>
</dbReference>
<dbReference type="GO" id="GO:0006062">
    <property type="term" value="P:sorbitol catabolic process"/>
    <property type="evidence" value="ECO:0007669"/>
    <property type="project" value="Ensembl"/>
</dbReference>
<dbReference type="GO" id="GO:0006060">
    <property type="term" value="P:sorbitol metabolic process"/>
    <property type="evidence" value="ECO:0000314"/>
    <property type="project" value="MGI"/>
</dbReference>
<dbReference type="GO" id="GO:0051160">
    <property type="term" value="P:xylitol catabolic process"/>
    <property type="evidence" value="ECO:0007669"/>
    <property type="project" value="Ensembl"/>
</dbReference>
<dbReference type="CDD" id="cd05285">
    <property type="entry name" value="sorbitol_DH"/>
    <property type="match status" value="1"/>
</dbReference>
<dbReference type="FunFam" id="3.40.50.720:FF:000068">
    <property type="entry name" value="Sorbitol dehydrogenase"/>
    <property type="match status" value="1"/>
</dbReference>
<dbReference type="Gene3D" id="3.90.180.10">
    <property type="entry name" value="Medium-chain alcohol dehydrogenases, catalytic domain"/>
    <property type="match status" value="1"/>
</dbReference>
<dbReference type="Gene3D" id="3.40.50.720">
    <property type="entry name" value="NAD(P)-binding Rossmann-like Domain"/>
    <property type="match status" value="1"/>
</dbReference>
<dbReference type="InterPro" id="IPR013149">
    <property type="entry name" value="ADH-like_C"/>
</dbReference>
<dbReference type="InterPro" id="IPR013154">
    <property type="entry name" value="ADH-like_N"/>
</dbReference>
<dbReference type="InterPro" id="IPR002328">
    <property type="entry name" value="ADH_Zn_CS"/>
</dbReference>
<dbReference type="InterPro" id="IPR011032">
    <property type="entry name" value="GroES-like_sf"/>
</dbReference>
<dbReference type="InterPro" id="IPR036291">
    <property type="entry name" value="NAD(P)-bd_dom_sf"/>
</dbReference>
<dbReference type="InterPro" id="IPR020843">
    <property type="entry name" value="PKS_ER"/>
</dbReference>
<dbReference type="InterPro" id="IPR045306">
    <property type="entry name" value="SDH-like"/>
</dbReference>
<dbReference type="PANTHER" id="PTHR43161">
    <property type="entry name" value="SORBITOL DEHYDROGENASE"/>
    <property type="match status" value="1"/>
</dbReference>
<dbReference type="PANTHER" id="PTHR43161:SF9">
    <property type="entry name" value="SORBITOL DEHYDROGENASE"/>
    <property type="match status" value="1"/>
</dbReference>
<dbReference type="Pfam" id="PF08240">
    <property type="entry name" value="ADH_N"/>
    <property type="match status" value="1"/>
</dbReference>
<dbReference type="Pfam" id="PF00107">
    <property type="entry name" value="ADH_zinc_N"/>
    <property type="match status" value="1"/>
</dbReference>
<dbReference type="SMART" id="SM00829">
    <property type="entry name" value="PKS_ER"/>
    <property type="match status" value="1"/>
</dbReference>
<dbReference type="SUPFAM" id="SSF50129">
    <property type="entry name" value="GroES-like"/>
    <property type="match status" value="1"/>
</dbReference>
<dbReference type="SUPFAM" id="SSF51735">
    <property type="entry name" value="NAD(P)-binding Rossmann-fold domains"/>
    <property type="match status" value="1"/>
</dbReference>
<dbReference type="PROSITE" id="PS00059">
    <property type="entry name" value="ADH_ZINC"/>
    <property type="match status" value="1"/>
</dbReference>